<gene>
    <name evidence="1" type="primary">cysZ</name>
    <name type="ordered locus">PA0846</name>
</gene>
<dbReference type="EMBL" id="AE004091">
    <property type="protein sequence ID" value="AAG04235.1"/>
    <property type="molecule type" value="Genomic_DNA"/>
</dbReference>
<dbReference type="PIR" id="D83540">
    <property type="entry name" value="D83540"/>
</dbReference>
<dbReference type="RefSeq" id="NP_249537.1">
    <property type="nucleotide sequence ID" value="NC_002516.2"/>
</dbReference>
<dbReference type="RefSeq" id="WP_003115194.1">
    <property type="nucleotide sequence ID" value="NZ_QZGE01000007.1"/>
</dbReference>
<dbReference type="SMR" id="Q9I595"/>
<dbReference type="FunCoup" id="Q9I595">
    <property type="interactions" value="31"/>
</dbReference>
<dbReference type="STRING" id="208964.PA0846"/>
<dbReference type="PaxDb" id="208964-PA0846"/>
<dbReference type="DNASU" id="880298"/>
<dbReference type="GeneID" id="880298"/>
<dbReference type="KEGG" id="pae:PA0846"/>
<dbReference type="PATRIC" id="fig|208964.12.peg.878"/>
<dbReference type="PseudoCAP" id="PA0846"/>
<dbReference type="HOGENOM" id="CLU_070331_1_0_6"/>
<dbReference type="InParanoid" id="Q9I595"/>
<dbReference type="OrthoDB" id="5292355at2"/>
<dbReference type="PhylomeDB" id="Q9I595"/>
<dbReference type="BioCyc" id="PAER208964:G1FZ6-861-MONOMER"/>
<dbReference type="Proteomes" id="UP000002438">
    <property type="component" value="Chromosome"/>
</dbReference>
<dbReference type="GO" id="GO:0005886">
    <property type="term" value="C:plasma membrane"/>
    <property type="evidence" value="ECO:0000318"/>
    <property type="project" value="GO_Central"/>
</dbReference>
<dbReference type="GO" id="GO:0009675">
    <property type="term" value="F:high-affinity sulfate:proton symporter activity"/>
    <property type="evidence" value="ECO:0000318"/>
    <property type="project" value="GO_Central"/>
</dbReference>
<dbReference type="GO" id="GO:0019344">
    <property type="term" value="P:cysteine biosynthetic process"/>
    <property type="evidence" value="ECO:0000318"/>
    <property type="project" value="GO_Central"/>
</dbReference>
<dbReference type="GO" id="GO:0000103">
    <property type="term" value="P:sulfate assimilation"/>
    <property type="evidence" value="ECO:0000318"/>
    <property type="project" value="GO_Central"/>
</dbReference>
<dbReference type="HAMAP" id="MF_00468">
    <property type="entry name" value="CysZ"/>
    <property type="match status" value="1"/>
</dbReference>
<dbReference type="InterPro" id="IPR050480">
    <property type="entry name" value="CysZ_sulfate_transptr"/>
</dbReference>
<dbReference type="InterPro" id="IPR022985">
    <property type="entry name" value="Sulfate_CysZ"/>
</dbReference>
<dbReference type="NCBIfam" id="NF003433">
    <property type="entry name" value="PRK04949.1"/>
    <property type="match status" value="1"/>
</dbReference>
<dbReference type="PANTHER" id="PTHR37468">
    <property type="entry name" value="SULFATE TRANSPORTER CYSZ"/>
    <property type="match status" value="1"/>
</dbReference>
<dbReference type="PANTHER" id="PTHR37468:SF1">
    <property type="entry name" value="SULFATE TRANSPORTER CYSZ"/>
    <property type="match status" value="1"/>
</dbReference>
<dbReference type="Pfam" id="PF07264">
    <property type="entry name" value="EI24"/>
    <property type="match status" value="1"/>
</dbReference>
<accession>Q9I595</accession>
<proteinExistence type="inferred from homology"/>
<feature type="chain" id="PRO_0000204344" description="Sulfate transporter CysZ">
    <location>
        <begin position="1"/>
        <end position="246"/>
    </location>
</feature>
<feature type="transmembrane region" description="Helical" evidence="1">
    <location>
        <begin position="24"/>
        <end position="44"/>
    </location>
</feature>
<feature type="transmembrane region" description="Helical" evidence="1">
    <location>
        <begin position="69"/>
        <end position="89"/>
    </location>
</feature>
<feature type="transmembrane region" description="Helical" evidence="1">
    <location>
        <begin position="148"/>
        <end position="168"/>
    </location>
</feature>
<feature type="transmembrane region" description="Helical" evidence="1">
    <location>
        <begin position="214"/>
        <end position="234"/>
    </location>
</feature>
<reference key="1">
    <citation type="journal article" date="2000" name="Nature">
        <title>Complete genome sequence of Pseudomonas aeruginosa PAO1, an opportunistic pathogen.</title>
        <authorList>
            <person name="Stover C.K."/>
            <person name="Pham X.-Q.T."/>
            <person name="Erwin A.L."/>
            <person name="Mizoguchi S.D."/>
            <person name="Warrener P."/>
            <person name="Hickey M.J."/>
            <person name="Brinkman F.S.L."/>
            <person name="Hufnagle W.O."/>
            <person name="Kowalik D.J."/>
            <person name="Lagrou M."/>
            <person name="Garber R.L."/>
            <person name="Goltry L."/>
            <person name="Tolentino E."/>
            <person name="Westbrock-Wadman S."/>
            <person name="Yuan Y."/>
            <person name="Brody L.L."/>
            <person name="Coulter S.N."/>
            <person name="Folger K.R."/>
            <person name="Kas A."/>
            <person name="Larbig K."/>
            <person name="Lim R.M."/>
            <person name="Smith K.A."/>
            <person name="Spencer D.H."/>
            <person name="Wong G.K.-S."/>
            <person name="Wu Z."/>
            <person name="Paulsen I.T."/>
            <person name="Reizer J."/>
            <person name="Saier M.H. Jr."/>
            <person name="Hancock R.E.W."/>
            <person name="Lory S."/>
            <person name="Olson M.V."/>
        </authorList>
    </citation>
    <scope>NUCLEOTIDE SEQUENCE [LARGE SCALE GENOMIC DNA]</scope>
    <source>
        <strain>ATCC 15692 / DSM 22644 / CIP 104116 / JCM 14847 / LMG 12228 / 1C / PRS 101 / PAO1</strain>
    </source>
</reference>
<sequence>MPALSGPQYLGEGLKLIMRPGLRLFVLIPLTLNLLVFALLIGFAMQQFSHWVDLLMPSLPDWLSFLQYIVWPLFVLLVLVIVFFTFTMVANIISAPFNGFLSEKVEVVVRGRDDFPPFSWAELLAMIPRTMGREMRKLAYFLPRALVLLVLSFVPGVNLIATPLWILFGIWMMAVQYIDYPADNHKLGWNEMLAWLRSKRWACMGFGGVTYLALLIPLVNLVMMPAAVAGATLFWVREEGERALVK</sequence>
<evidence type="ECO:0000255" key="1">
    <source>
        <dbReference type="HAMAP-Rule" id="MF_00468"/>
    </source>
</evidence>
<name>CYSZ_PSEAE</name>
<protein>
    <recommendedName>
        <fullName evidence="1">Sulfate transporter CysZ</fullName>
    </recommendedName>
</protein>
<keyword id="KW-0028">Amino-acid biosynthesis</keyword>
<keyword id="KW-0997">Cell inner membrane</keyword>
<keyword id="KW-1003">Cell membrane</keyword>
<keyword id="KW-0198">Cysteine biosynthesis</keyword>
<keyword id="KW-0472">Membrane</keyword>
<keyword id="KW-1185">Reference proteome</keyword>
<keyword id="KW-0764">Sulfate transport</keyword>
<keyword id="KW-0812">Transmembrane</keyword>
<keyword id="KW-1133">Transmembrane helix</keyword>
<keyword id="KW-0813">Transport</keyword>
<organism>
    <name type="scientific">Pseudomonas aeruginosa (strain ATCC 15692 / DSM 22644 / CIP 104116 / JCM 14847 / LMG 12228 / 1C / PRS 101 / PAO1)</name>
    <dbReference type="NCBI Taxonomy" id="208964"/>
    <lineage>
        <taxon>Bacteria</taxon>
        <taxon>Pseudomonadati</taxon>
        <taxon>Pseudomonadota</taxon>
        <taxon>Gammaproteobacteria</taxon>
        <taxon>Pseudomonadales</taxon>
        <taxon>Pseudomonadaceae</taxon>
        <taxon>Pseudomonas</taxon>
    </lineage>
</organism>
<comment type="function">
    <text evidence="1">High affinity, high specificity proton-dependent sulfate transporter, which mediates sulfate uptake. Provides the sulfur source for the cysteine synthesis pathway.</text>
</comment>
<comment type="subcellular location">
    <subcellularLocation>
        <location evidence="1">Cell inner membrane</location>
        <topology evidence="1">Multi-pass membrane protein</topology>
    </subcellularLocation>
</comment>
<comment type="similarity">
    <text evidence="1">Belongs to the CysZ family.</text>
</comment>